<keyword id="KW-0001">2Fe-2S</keyword>
<keyword id="KW-1003">Cell membrane</keyword>
<keyword id="KW-1015">Disulfide bond</keyword>
<keyword id="KW-0249">Electron transport</keyword>
<keyword id="KW-0408">Iron</keyword>
<keyword id="KW-0411">Iron-sulfur</keyword>
<keyword id="KW-0472">Membrane</keyword>
<keyword id="KW-0479">Metal-binding</keyword>
<keyword id="KW-1278">Translocase</keyword>
<keyword id="KW-0812">Transmembrane</keyword>
<keyword id="KW-1133">Transmembrane helix</keyword>
<keyword id="KW-0813">Transport</keyword>
<sequence>MSDTEDNRNKQTTRRDFIVLTASSVAAVGAACAFWPIIDSLNPSTDVLALSSIEVDLSSIAIGQTVTVKWQGKPIFITNRTPDGIASARAVKMSELIDPEKDEVRVKAGHDNWLVTIGICTHLGCVPLSNQGEYNGWFCPCHGSQYDSSGRVRKGPASLNLVVPPYIFISDTKIRIG</sequence>
<proteinExistence type="inferred from homology"/>
<protein>
    <recommendedName>
        <fullName>Ubiquinol-cytochrome c reductase iron-sulfur subunit</fullName>
        <ecNumber>7.1.1.8</ecNumber>
    </recommendedName>
    <alternativeName>
        <fullName>Rieske iron-sulfur protein</fullName>
        <shortName>RISP</shortName>
    </alternativeName>
</protein>
<reference key="1">
    <citation type="journal article" date="2004" name="J. Bacteriol.">
        <title>Complete genome sequence of Rickettsia typhi and comparison with sequences of other Rickettsiae.</title>
        <authorList>
            <person name="McLeod M.P."/>
            <person name="Qin X."/>
            <person name="Karpathy S.E."/>
            <person name="Gioia J."/>
            <person name="Highlander S.K."/>
            <person name="Fox G.E."/>
            <person name="McNeill T.Z."/>
            <person name="Jiang H."/>
            <person name="Muzny D."/>
            <person name="Jacob L.S."/>
            <person name="Hawes A.C."/>
            <person name="Sodergren E."/>
            <person name="Gill R."/>
            <person name="Hume J."/>
            <person name="Morgan M."/>
            <person name="Fan G."/>
            <person name="Amin A.G."/>
            <person name="Gibbs R.A."/>
            <person name="Hong C."/>
            <person name="Yu X.-J."/>
            <person name="Walker D.H."/>
            <person name="Weinstock G.M."/>
        </authorList>
    </citation>
    <scope>NUCLEOTIDE SEQUENCE [LARGE SCALE GENOMIC DNA]</scope>
    <source>
        <strain>ATCC VR-144 / Wilmington</strain>
    </source>
</reference>
<dbReference type="EC" id="7.1.1.8"/>
<dbReference type="EMBL" id="AE017197">
    <property type="protein sequence ID" value="AAU03742.1"/>
    <property type="molecule type" value="Genomic_DNA"/>
</dbReference>
<dbReference type="RefSeq" id="WP_011190727.1">
    <property type="nucleotide sequence ID" value="NC_006142.1"/>
</dbReference>
<dbReference type="SMR" id="Q68XA0"/>
<dbReference type="KEGG" id="rty:RT0261"/>
<dbReference type="eggNOG" id="COG0723">
    <property type="taxonomic scope" value="Bacteria"/>
</dbReference>
<dbReference type="HOGENOM" id="CLU_055690_0_2_5"/>
<dbReference type="OrthoDB" id="9767869at2"/>
<dbReference type="Proteomes" id="UP000000604">
    <property type="component" value="Chromosome"/>
</dbReference>
<dbReference type="GO" id="GO:0005886">
    <property type="term" value="C:plasma membrane"/>
    <property type="evidence" value="ECO:0007669"/>
    <property type="project" value="UniProtKB-SubCell"/>
</dbReference>
<dbReference type="GO" id="GO:0051537">
    <property type="term" value="F:2 iron, 2 sulfur cluster binding"/>
    <property type="evidence" value="ECO:0007669"/>
    <property type="project" value="UniProtKB-KW"/>
</dbReference>
<dbReference type="GO" id="GO:0046872">
    <property type="term" value="F:metal ion binding"/>
    <property type="evidence" value="ECO:0007669"/>
    <property type="project" value="UniProtKB-KW"/>
</dbReference>
<dbReference type="GO" id="GO:0008121">
    <property type="term" value="F:ubiquinol-cytochrome-c reductase activity"/>
    <property type="evidence" value="ECO:0007669"/>
    <property type="project" value="UniProtKB-EC"/>
</dbReference>
<dbReference type="CDD" id="cd03470">
    <property type="entry name" value="Rieske_cytochrome_bc1"/>
    <property type="match status" value="1"/>
</dbReference>
<dbReference type="FunFam" id="2.102.10.10:FF:000001">
    <property type="entry name" value="Cytochrome b-c1 complex subunit Rieske, mitochondrial"/>
    <property type="match status" value="1"/>
</dbReference>
<dbReference type="Gene3D" id="2.102.10.10">
    <property type="entry name" value="Rieske [2Fe-2S] iron-sulphur domain"/>
    <property type="match status" value="1"/>
</dbReference>
<dbReference type="Gene3D" id="1.20.5.510">
    <property type="entry name" value="Single helix bin"/>
    <property type="match status" value="1"/>
</dbReference>
<dbReference type="InterPro" id="IPR017941">
    <property type="entry name" value="Rieske_2Fe-2S"/>
</dbReference>
<dbReference type="InterPro" id="IPR036922">
    <property type="entry name" value="Rieske_2Fe-2S_sf"/>
</dbReference>
<dbReference type="InterPro" id="IPR014349">
    <property type="entry name" value="Rieske_Fe-S_prot"/>
</dbReference>
<dbReference type="InterPro" id="IPR005805">
    <property type="entry name" value="Rieske_Fe-S_prot_C"/>
</dbReference>
<dbReference type="InterPro" id="IPR006311">
    <property type="entry name" value="TAT_signal"/>
</dbReference>
<dbReference type="InterPro" id="IPR019546">
    <property type="entry name" value="TAT_signal_bac_arc"/>
</dbReference>
<dbReference type="InterPro" id="IPR019470">
    <property type="entry name" value="Ubiq_cytC_Rdtase_Fe-S_su_TAT"/>
</dbReference>
<dbReference type="InterPro" id="IPR006317">
    <property type="entry name" value="Ubiquinol_cyt_c_Rdtase_Fe-S-su"/>
</dbReference>
<dbReference type="NCBIfam" id="TIGR01416">
    <property type="entry name" value="Rieske_proteo"/>
    <property type="match status" value="1"/>
</dbReference>
<dbReference type="NCBIfam" id="TIGR01409">
    <property type="entry name" value="TAT_signal_seq"/>
    <property type="match status" value="1"/>
</dbReference>
<dbReference type="PANTHER" id="PTHR10134">
    <property type="entry name" value="CYTOCHROME B-C1 COMPLEX SUBUNIT RIESKE, MITOCHONDRIAL"/>
    <property type="match status" value="1"/>
</dbReference>
<dbReference type="Pfam" id="PF00355">
    <property type="entry name" value="Rieske"/>
    <property type="match status" value="1"/>
</dbReference>
<dbReference type="Pfam" id="PF10399">
    <property type="entry name" value="UCR_Fe-S_N"/>
    <property type="match status" value="1"/>
</dbReference>
<dbReference type="PRINTS" id="PR00162">
    <property type="entry name" value="RIESKE"/>
</dbReference>
<dbReference type="SUPFAM" id="SSF50022">
    <property type="entry name" value="ISP domain"/>
    <property type="match status" value="1"/>
</dbReference>
<dbReference type="PROSITE" id="PS51296">
    <property type="entry name" value="RIESKE"/>
    <property type="match status" value="1"/>
</dbReference>
<dbReference type="PROSITE" id="PS51318">
    <property type="entry name" value="TAT"/>
    <property type="match status" value="1"/>
</dbReference>
<gene>
    <name type="primary">petA</name>
    <name type="ordered locus">RT0261</name>
</gene>
<evidence type="ECO:0000255" key="1"/>
<evidence type="ECO:0000255" key="2">
    <source>
        <dbReference type="PROSITE-ProRule" id="PRU00628"/>
    </source>
</evidence>
<evidence type="ECO:0000305" key="3"/>
<organism>
    <name type="scientific">Rickettsia typhi (strain ATCC VR-144 / Wilmington)</name>
    <dbReference type="NCBI Taxonomy" id="257363"/>
    <lineage>
        <taxon>Bacteria</taxon>
        <taxon>Pseudomonadati</taxon>
        <taxon>Pseudomonadota</taxon>
        <taxon>Alphaproteobacteria</taxon>
        <taxon>Rickettsiales</taxon>
        <taxon>Rickettsiaceae</taxon>
        <taxon>Rickettsieae</taxon>
        <taxon>Rickettsia</taxon>
        <taxon>typhus group</taxon>
    </lineage>
</organism>
<comment type="function">
    <text>Component of the ubiquinol-cytochrome c reductase complex (complex III or cytochrome b-c1 complex), which is a respiratory chain that generates an electrochemical potential coupled to ATP synthesis.</text>
</comment>
<comment type="catalytic activity">
    <reaction>
        <text>a quinol + 2 Fe(III)-[cytochrome c](out) = a quinone + 2 Fe(II)-[cytochrome c](out) + 2 H(+)(out)</text>
        <dbReference type="Rhea" id="RHEA:11484"/>
        <dbReference type="Rhea" id="RHEA-COMP:10350"/>
        <dbReference type="Rhea" id="RHEA-COMP:14399"/>
        <dbReference type="ChEBI" id="CHEBI:15378"/>
        <dbReference type="ChEBI" id="CHEBI:24646"/>
        <dbReference type="ChEBI" id="CHEBI:29033"/>
        <dbReference type="ChEBI" id="CHEBI:29034"/>
        <dbReference type="ChEBI" id="CHEBI:132124"/>
        <dbReference type="EC" id="7.1.1.8"/>
    </reaction>
</comment>
<comment type="cofactor">
    <cofactor evidence="2">
        <name>[2Fe-2S] cluster</name>
        <dbReference type="ChEBI" id="CHEBI:190135"/>
    </cofactor>
    <text evidence="2">Binds 1 [2Fe-2S] cluster per subunit.</text>
</comment>
<comment type="subunit">
    <text>The main subunits of complex b-c1 are: cytochrome b, cytochrome c1 and the Rieske protein.</text>
</comment>
<comment type="subcellular location">
    <subcellularLocation>
        <location evidence="3">Cell membrane</location>
        <topology evidence="3">Single-pass membrane protein</topology>
    </subcellularLocation>
</comment>
<comment type="miscellaneous">
    <text>The Rieske protein is a high potential 2Fe-2S protein.</text>
</comment>
<comment type="similarity">
    <text evidence="3">Belongs to the Rieske iron-sulfur protein family.</text>
</comment>
<accession>Q68XA0</accession>
<name>UCRI_RICTY</name>
<feature type="chain" id="PRO_0000286644" description="Ubiquinol-cytochrome c reductase iron-sulfur subunit">
    <location>
        <begin position="1"/>
        <end position="177"/>
    </location>
</feature>
<feature type="transmembrane region" description="Helical" evidence="1">
    <location>
        <begin position="18"/>
        <end position="38"/>
    </location>
</feature>
<feature type="domain" description="Rieske" evidence="2">
    <location>
        <begin position="88"/>
        <end position="175"/>
    </location>
</feature>
<feature type="binding site" evidence="2">
    <location>
        <position position="120"/>
    </location>
    <ligand>
        <name>[2Fe-2S] cluster</name>
        <dbReference type="ChEBI" id="CHEBI:190135"/>
    </ligand>
</feature>
<feature type="binding site" evidence="2">
    <location>
        <position position="122"/>
    </location>
    <ligand>
        <name>[2Fe-2S] cluster</name>
        <dbReference type="ChEBI" id="CHEBI:190135"/>
    </ligand>
</feature>
<feature type="binding site" evidence="2">
    <location>
        <position position="139"/>
    </location>
    <ligand>
        <name>[2Fe-2S] cluster</name>
        <dbReference type="ChEBI" id="CHEBI:190135"/>
    </ligand>
</feature>
<feature type="binding site" evidence="2">
    <location>
        <position position="142"/>
    </location>
    <ligand>
        <name>[2Fe-2S] cluster</name>
        <dbReference type="ChEBI" id="CHEBI:190135"/>
    </ligand>
</feature>
<feature type="disulfide bond" evidence="2">
    <location>
        <begin position="125"/>
        <end position="141"/>
    </location>
</feature>